<evidence type="ECO:0000250" key="1"/>
<evidence type="ECO:0000255" key="2">
    <source>
        <dbReference type="PROSITE-ProRule" id="PRU00655"/>
    </source>
</evidence>
<proteinExistence type="inferred from homology"/>
<accession>Q874N0</accession>
<gene>
    <name type="primary">MATALPHA1</name>
    <name type="synonym">ALPHA1</name>
</gene>
<sequence length="194" mass="22039">MSVKTKKFVNKKYTTAKFKVTPTGKCRNKNNESIKKLIFNNGTKINTGLNLLLTQPNQVNIPPPPKILLDRIREERKRMVSSANSDITVIDIELCWEIDKFLAHHFQNTDSSKNDNYTKSNIKKPINAFIAFRAYYSQLGAGIKQNILSSILSEAWNSPETDQNIWDIFAQQFNFASARCGFVNYIMAQASSAP</sequence>
<reference key="1">
    <citation type="journal article" date="2003" name="Genome Biol.">
        <title>Evidence from comparative genomics for a complete sexual cycle in the 'asexual' pathogenic yeast Candida glabrata.</title>
        <authorList>
            <person name="Wong S."/>
            <person name="Fares M.A."/>
            <person name="Zimmermann W."/>
            <person name="Butler G."/>
            <person name="Wolfe K.H."/>
        </authorList>
    </citation>
    <scope>NUCLEOTIDE SEQUENCE [GENOMIC DNA]</scope>
    <source>
        <strain>ATCC 24205 / CBS 2170 / NBRC 10602 / NRRL Y-2379 / UCD 56-2</strain>
    </source>
</reference>
<name>MTAL1_NAKDE</name>
<feature type="chain" id="PRO_0000206016" description="Mating-type protein ALPHA1">
    <location>
        <begin position="1"/>
        <end position="194"/>
    </location>
</feature>
<feature type="DNA-binding region" description="Alpha box" evidence="2">
    <location>
        <begin position="121"/>
        <end position="177"/>
    </location>
</feature>
<organism>
    <name type="scientific">Nakaseomyces delphensis</name>
    <name type="common">Yeast</name>
    <name type="synonym">Kluyveromyces delphensis</name>
    <dbReference type="NCBI Taxonomy" id="51657"/>
    <lineage>
        <taxon>Eukaryota</taxon>
        <taxon>Fungi</taxon>
        <taxon>Dikarya</taxon>
        <taxon>Ascomycota</taxon>
        <taxon>Saccharomycotina</taxon>
        <taxon>Saccharomycetes</taxon>
        <taxon>Saccharomycetales</taxon>
        <taxon>Saccharomycetaceae</taxon>
        <taxon>Nakaseomyces</taxon>
    </lineage>
</organism>
<comment type="function">
    <text evidence="1">Mating type proteins are sequence specific DNA-binding proteins that act as master switches in yeast differentiation by controlling gene expression in a cell type-specific fashion. Transcriptional activator that induces the transcription of alpha-specific genes (By similarity).</text>
</comment>
<comment type="subcellular location">
    <subcellularLocation>
        <location evidence="2">Nucleus</location>
    </subcellularLocation>
</comment>
<comment type="miscellaneous">
    <text>There are three genetic loci for mating type genes in K.delphensis. MAT is the expression locus that determines the mating type of the cell, whereas HML (containing HMLALPHA1 and HMLALPHA2) and HMR (containing HMRA1) represent silenced repositories of mating type information. The mating type is determined by the MAT locus, which contains either a copy of HML or of HMR. Diploid cells are usually heterozygous for the MAT locus.</text>
</comment>
<comment type="similarity">
    <text evidence="2">Belongs to the MATALPHA1 family.</text>
</comment>
<protein>
    <recommendedName>
        <fullName>Mating-type protein ALPHA1</fullName>
    </recommendedName>
</protein>
<dbReference type="EMBL" id="AY181248">
    <property type="protein sequence ID" value="AAO25603.1"/>
    <property type="molecule type" value="Genomic_DNA"/>
</dbReference>
<dbReference type="GO" id="GO:0005634">
    <property type="term" value="C:nucleus"/>
    <property type="evidence" value="ECO:0007669"/>
    <property type="project" value="UniProtKB-SubCell"/>
</dbReference>
<dbReference type="GO" id="GO:0008301">
    <property type="term" value="F:DNA binding, bending"/>
    <property type="evidence" value="ECO:0007669"/>
    <property type="project" value="InterPro"/>
</dbReference>
<dbReference type="GO" id="GO:0043565">
    <property type="term" value="F:sequence-specific DNA binding"/>
    <property type="evidence" value="ECO:0007669"/>
    <property type="project" value="InterPro"/>
</dbReference>
<dbReference type="GO" id="GO:0045895">
    <property type="term" value="P:positive regulation of mating-type specific transcription, DNA-templated"/>
    <property type="evidence" value="ECO:0007669"/>
    <property type="project" value="InterPro"/>
</dbReference>
<dbReference type="InterPro" id="IPR016325">
    <property type="entry name" value="ALPHA1_Saccharomycetales"/>
</dbReference>
<dbReference type="InterPro" id="IPR006856">
    <property type="entry name" value="MATalpha_HMGbox"/>
</dbReference>
<dbReference type="Pfam" id="PF04769">
    <property type="entry name" value="MATalpha_HMGbox"/>
    <property type="match status" value="1"/>
</dbReference>
<dbReference type="PIRSF" id="PIRSF001863">
    <property type="entry name" value="Transcrpt_activ_MAT_Alpha1"/>
    <property type="match status" value="1"/>
</dbReference>
<dbReference type="PROSITE" id="PS51325">
    <property type="entry name" value="ALPHA_BOX"/>
    <property type="match status" value="1"/>
</dbReference>
<keyword id="KW-0010">Activator</keyword>
<keyword id="KW-0238">DNA-binding</keyword>
<keyword id="KW-0539">Nucleus</keyword>
<keyword id="KW-0804">Transcription</keyword>
<keyword id="KW-0805">Transcription regulation</keyword>